<proteinExistence type="inferred from homology"/>
<comment type="function">
    <text evidence="4">Hydroxynaphthalene reductase-like protein; part of the Pks2 gene cluster that mediates the formation of infectious structures (appressoria), enabling these fungi to kill insects faster (PubMed:29958281). The product of the Pks2 gene cluster is different from the one of Pks1 and has still not been identified (PubMed:29958281).</text>
</comment>
<comment type="similarity">
    <text evidence="6">Belongs to the short-chain dehydrogenases/reductases (SDR) family.</text>
</comment>
<organism>
    <name type="scientific">Metarhizium acridum (strain CQMa 102)</name>
    <dbReference type="NCBI Taxonomy" id="655827"/>
    <lineage>
        <taxon>Eukaryota</taxon>
        <taxon>Fungi</taxon>
        <taxon>Dikarya</taxon>
        <taxon>Ascomycota</taxon>
        <taxon>Pezizomycotina</taxon>
        <taxon>Sordariomycetes</taxon>
        <taxon>Hypocreomycetidae</taxon>
        <taxon>Hypocreales</taxon>
        <taxon>Clavicipitaceae</taxon>
        <taxon>Metarhizium</taxon>
    </lineage>
</organism>
<dbReference type="EC" id="1.1.-.-" evidence="7"/>
<dbReference type="EMBL" id="GL698613">
    <property type="protein sequence ID" value="EFY84644.1"/>
    <property type="molecule type" value="Genomic_DNA"/>
</dbReference>
<dbReference type="RefSeq" id="XP_007815649.1">
    <property type="nucleotide sequence ID" value="XM_007817458.1"/>
</dbReference>
<dbReference type="SMR" id="E9EHG1"/>
<dbReference type="STRING" id="655827.E9EHG1"/>
<dbReference type="GeneID" id="19253620"/>
<dbReference type="KEGG" id="maw:19253620"/>
<dbReference type="eggNOG" id="KOG0725">
    <property type="taxonomic scope" value="Eukaryota"/>
</dbReference>
<dbReference type="HOGENOM" id="CLU_010194_1_3_1"/>
<dbReference type="InParanoid" id="E9EHG1"/>
<dbReference type="OMA" id="CQKHMVD"/>
<dbReference type="OrthoDB" id="47007at2759"/>
<dbReference type="Proteomes" id="UP000002499">
    <property type="component" value="Unassembled WGS sequence"/>
</dbReference>
<dbReference type="GO" id="GO:0016491">
    <property type="term" value="F:oxidoreductase activity"/>
    <property type="evidence" value="ECO:0007669"/>
    <property type="project" value="UniProtKB-KW"/>
</dbReference>
<dbReference type="FunFam" id="3.40.50.720:FF:000084">
    <property type="entry name" value="Short-chain dehydrogenase reductase"/>
    <property type="match status" value="1"/>
</dbReference>
<dbReference type="Gene3D" id="3.40.50.720">
    <property type="entry name" value="NAD(P)-binding Rossmann-like Domain"/>
    <property type="match status" value="1"/>
</dbReference>
<dbReference type="InterPro" id="IPR036291">
    <property type="entry name" value="NAD(P)-bd_dom_sf"/>
</dbReference>
<dbReference type="InterPro" id="IPR020904">
    <property type="entry name" value="Sc_DH/Rdtase_CS"/>
</dbReference>
<dbReference type="InterPro" id="IPR002347">
    <property type="entry name" value="SDR_fam"/>
</dbReference>
<dbReference type="PANTHER" id="PTHR43639">
    <property type="entry name" value="OXIDOREDUCTASE, SHORT-CHAIN DEHYDROGENASE/REDUCTASE FAMILY (AFU_ORTHOLOGUE AFUA_5G02870)"/>
    <property type="match status" value="1"/>
</dbReference>
<dbReference type="PANTHER" id="PTHR43639:SF1">
    <property type="entry name" value="SHORT-CHAIN DEHYDROGENASE_REDUCTASE FAMILY PROTEIN"/>
    <property type="match status" value="1"/>
</dbReference>
<dbReference type="Pfam" id="PF13561">
    <property type="entry name" value="adh_short_C2"/>
    <property type="match status" value="1"/>
</dbReference>
<dbReference type="PRINTS" id="PR00081">
    <property type="entry name" value="GDHRDH"/>
</dbReference>
<dbReference type="PRINTS" id="PR00080">
    <property type="entry name" value="SDRFAMILY"/>
</dbReference>
<dbReference type="SMART" id="SM00822">
    <property type="entry name" value="PKS_KR"/>
    <property type="match status" value="1"/>
</dbReference>
<dbReference type="SUPFAM" id="SSF51735">
    <property type="entry name" value="NAD(P)-binding Rossmann-fold domains"/>
    <property type="match status" value="1"/>
</dbReference>
<dbReference type="PROSITE" id="PS00061">
    <property type="entry name" value="ADH_SHORT"/>
    <property type="match status" value="1"/>
</dbReference>
<keyword id="KW-0521">NADP</keyword>
<keyword id="KW-0560">Oxidoreductase</keyword>
<keyword id="KW-1185">Reference proteome</keyword>
<evidence type="ECO:0000250" key="1">
    <source>
        <dbReference type="UniProtKB" id="L0E2Z4"/>
    </source>
</evidence>
<evidence type="ECO:0000250" key="2">
    <source>
        <dbReference type="UniProtKB" id="O93868"/>
    </source>
</evidence>
<evidence type="ECO:0000255" key="3">
    <source>
        <dbReference type="PROSITE-ProRule" id="PRU10001"/>
    </source>
</evidence>
<evidence type="ECO:0000269" key="4">
    <source>
    </source>
</evidence>
<evidence type="ECO:0000303" key="5">
    <source>
    </source>
</evidence>
<evidence type="ECO:0000305" key="6"/>
<evidence type="ECO:0000305" key="7">
    <source>
    </source>
</evidence>
<sequence>MASTEEIPRSLAGKVALITGAGRGIGKGIAIELAKRGASVIVNYNSADKPAQEVVDEIAKTGSRAIAIKADITKVPEVSRLFQEALQHFGHLDIVVSNSGTEVFKPEEEVTEEDYDRVFNLNTRAQFFVAQHAYIHLRNGGRIILMSSVAANMSGIPNHALYAGSKAAVEGFTRSFAVDAGHKKITVNAIAPGGVKTDMYDANAWHYVPGGKPGMPMEEIDKGLAAFCPLERVAVPQDIGRVVAFLAHPDSEWVNGQIILLTGGSIT</sequence>
<reference key="1">
    <citation type="journal article" date="2011" name="PLoS Genet.">
        <title>Genome sequencing and comparative transcriptomics of the model entomopathogenic fungi Metarhizium anisopliae and M. acridum.</title>
        <authorList>
            <person name="Gao Q."/>
            <person name="Jin K."/>
            <person name="Ying S.-H."/>
            <person name="Zhang Y."/>
            <person name="Xiao G."/>
            <person name="Shang Y."/>
            <person name="Duan Z."/>
            <person name="Hu X."/>
            <person name="Xie X.-Q."/>
            <person name="Zhou G."/>
            <person name="Peng G."/>
            <person name="Luo Z."/>
            <person name="Huang W."/>
            <person name="Wang B."/>
            <person name="Fang W."/>
            <person name="Wang S."/>
            <person name="Zhong Y."/>
            <person name="Ma L.-J."/>
            <person name="St Leger R.J."/>
            <person name="Zhao G.-P."/>
            <person name="Pei Y."/>
            <person name="Feng M.-G."/>
            <person name="Xia Y."/>
            <person name="Wang C."/>
        </authorList>
    </citation>
    <scope>NUCLEOTIDE SEQUENCE [LARGE SCALE GENOMIC DNA]</scope>
    <source>
        <strain>CQMa 102</strain>
    </source>
</reference>
<reference key="2">
    <citation type="journal article" date="2018" name="PLoS Genet.">
        <title>Duplication of a Pks gene cluster and subsequent functional diversification facilitate environmental adaptation in Metarhizium species.</title>
        <authorList>
            <person name="Zeng G."/>
            <person name="Zhang P."/>
            <person name="Zhang Q."/>
            <person name="Zhao H."/>
            <person name="Li Z."/>
            <person name="Zhang X."/>
            <person name="Wang C."/>
            <person name="Yin W.B."/>
            <person name="Fang W."/>
        </authorList>
    </citation>
    <scope>IDENTIFICATION</scope>
    <scope>FUNCTION</scope>
</reference>
<gene>
    <name evidence="5" type="primary">Arp2</name>
    <name type="ORF">MAC_09309</name>
</gene>
<accession>E9EHG1</accession>
<protein>
    <recommendedName>
        <fullName evidence="5">Hydroxynaphthalene reductase-like protein Arp2</fullName>
        <ecNumber evidence="7">1.1.-.-</ecNumber>
    </recommendedName>
</protein>
<name>ARP2_METAQ</name>
<feature type="chain" id="PRO_0000445813" description="Hydroxynaphthalene reductase-like protein Arp2">
    <location>
        <begin position="1"/>
        <end position="267"/>
    </location>
</feature>
<feature type="active site" description="Proton donor" evidence="2">
    <location>
        <position position="147"/>
    </location>
</feature>
<feature type="active site" description="Proton donor" evidence="2">
    <location>
        <position position="148"/>
    </location>
</feature>
<feature type="active site" description="Proton acceptor" evidence="3">
    <location>
        <position position="162"/>
    </location>
</feature>
<feature type="active site" description="Lowers pKa of active site Tyr" evidence="2">
    <location>
        <position position="166"/>
    </location>
</feature>
<feature type="binding site" evidence="1">
    <location>
        <position position="25"/>
    </location>
    <ligand>
        <name>NADP(+)</name>
        <dbReference type="ChEBI" id="CHEBI:58349"/>
    </ligand>
</feature>
<feature type="binding site" evidence="1">
    <location>
        <position position="45"/>
    </location>
    <ligand>
        <name>NADP(+)</name>
        <dbReference type="ChEBI" id="CHEBI:58349"/>
    </ligand>
</feature>
<feature type="binding site" evidence="1">
    <location>
        <position position="71"/>
    </location>
    <ligand>
        <name>NADP(+)</name>
        <dbReference type="ChEBI" id="CHEBI:58349"/>
    </ligand>
</feature>
<feature type="binding site" evidence="2">
    <location>
        <position position="98"/>
    </location>
    <ligand>
        <name>NADP(+)</name>
        <dbReference type="ChEBI" id="CHEBI:58349"/>
    </ligand>
</feature>
<feature type="binding site" evidence="2">
    <location>
        <position position="162"/>
    </location>
    <ligand>
        <name>NADP(+)</name>
        <dbReference type="ChEBI" id="CHEBI:58349"/>
    </ligand>
</feature>
<feature type="binding site" evidence="2">
    <location>
        <position position="166"/>
    </location>
    <ligand>
        <name>NADP(+)</name>
        <dbReference type="ChEBI" id="CHEBI:58349"/>
    </ligand>
</feature>
<feature type="binding site" evidence="2">
    <location>
        <position position="195"/>
    </location>
    <ligand>
        <name>NADP(+)</name>
        <dbReference type="ChEBI" id="CHEBI:58349"/>
    </ligand>
</feature>
<feature type="binding site" evidence="1">
    <location>
        <position position="197"/>
    </location>
    <ligand>
        <name>NADP(+)</name>
        <dbReference type="ChEBI" id="CHEBI:58349"/>
    </ligand>
</feature>